<protein>
    <recommendedName>
        <fullName evidence="1">Phosphopentomutase</fullName>
        <ecNumber evidence="1">5.4.2.7</ecNumber>
    </recommendedName>
    <alternativeName>
        <fullName evidence="1">Phosphodeoxyribomutase</fullName>
    </alternativeName>
</protein>
<accession>Q0TU57</accession>
<reference key="1">
    <citation type="journal article" date="2006" name="Genome Res.">
        <title>Skewed genomic variability in strains of the toxigenic bacterial pathogen, Clostridium perfringens.</title>
        <authorList>
            <person name="Myers G.S.A."/>
            <person name="Rasko D.A."/>
            <person name="Cheung J.K."/>
            <person name="Ravel J."/>
            <person name="Seshadri R."/>
            <person name="DeBoy R.T."/>
            <person name="Ren Q."/>
            <person name="Varga J."/>
            <person name="Awad M.M."/>
            <person name="Brinkac L.M."/>
            <person name="Daugherty S.C."/>
            <person name="Haft D.H."/>
            <person name="Dodson R.J."/>
            <person name="Madupu R."/>
            <person name="Nelson W.C."/>
            <person name="Rosovitz M.J."/>
            <person name="Sullivan S.A."/>
            <person name="Khouri H."/>
            <person name="Dimitrov G.I."/>
            <person name="Watkins K.L."/>
            <person name="Mulligan S."/>
            <person name="Benton J."/>
            <person name="Radune D."/>
            <person name="Fisher D.J."/>
            <person name="Atkins H.S."/>
            <person name="Hiscox T."/>
            <person name="Jost B.H."/>
            <person name="Billington S.J."/>
            <person name="Songer J.G."/>
            <person name="McClane B.A."/>
            <person name="Titball R.W."/>
            <person name="Rood J.I."/>
            <person name="Melville S.B."/>
            <person name="Paulsen I.T."/>
        </authorList>
    </citation>
    <scope>NUCLEOTIDE SEQUENCE [LARGE SCALE GENOMIC DNA]</scope>
    <source>
        <strain>ATCC 13124 / DSM 756 / JCM 1290 / NCIMB 6125 / NCTC 8237 / S 107 / Type A</strain>
    </source>
</reference>
<organism>
    <name type="scientific">Clostridium perfringens (strain ATCC 13124 / DSM 756 / JCM 1290 / NCIMB 6125 / NCTC 8237 / Type A)</name>
    <dbReference type="NCBI Taxonomy" id="195103"/>
    <lineage>
        <taxon>Bacteria</taxon>
        <taxon>Bacillati</taxon>
        <taxon>Bacillota</taxon>
        <taxon>Clostridia</taxon>
        <taxon>Eubacteriales</taxon>
        <taxon>Clostridiaceae</taxon>
        <taxon>Clostridium</taxon>
    </lineage>
</organism>
<dbReference type="EC" id="5.4.2.7" evidence="1"/>
<dbReference type="EMBL" id="CP000246">
    <property type="protein sequence ID" value="ABG83289.1"/>
    <property type="molecule type" value="Genomic_DNA"/>
</dbReference>
<dbReference type="RefSeq" id="WP_003450068.1">
    <property type="nucleotide sequence ID" value="NC_008261.1"/>
</dbReference>
<dbReference type="SMR" id="Q0TU57"/>
<dbReference type="STRING" id="195103.CPF_0376"/>
<dbReference type="PaxDb" id="195103-CPF_0376"/>
<dbReference type="KEGG" id="cpf:CPF_0376"/>
<dbReference type="eggNOG" id="COG1015">
    <property type="taxonomic scope" value="Bacteria"/>
</dbReference>
<dbReference type="HOGENOM" id="CLU_053861_0_0_9"/>
<dbReference type="UniPathway" id="UPA00002">
    <property type="reaction ID" value="UER00467"/>
</dbReference>
<dbReference type="Proteomes" id="UP000001823">
    <property type="component" value="Chromosome"/>
</dbReference>
<dbReference type="GO" id="GO:0005829">
    <property type="term" value="C:cytosol"/>
    <property type="evidence" value="ECO:0007669"/>
    <property type="project" value="TreeGrafter"/>
</dbReference>
<dbReference type="GO" id="GO:0000287">
    <property type="term" value="F:magnesium ion binding"/>
    <property type="evidence" value="ECO:0007669"/>
    <property type="project" value="InterPro"/>
</dbReference>
<dbReference type="GO" id="GO:0030145">
    <property type="term" value="F:manganese ion binding"/>
    <property type="evidence" value="ECO:0007669"/>
    <property type="project" value="UniProtKB-UniRule"/>
</dbReference>
<dbReference type="GO" id="GO:0008973">
    <property type="term" value="F:phosphopentomutase activity"/>
    <property type="evidence" value="ECO:0007669"/>
    <property type="project" value="UniProtKB-UniRule"/>
</dbReference>
<dbReference type="GO" id="GO:0006018">
    <property type="term" value="P:2-deoxyribose 1-phosphate catabolic process"/>
    <property type="evidence" value="ECO:0007669"/>
    <property type="project" value="UniProtKB-UniRule"/>
</dbReference>
<dbReference type="GO" id="GO:0006015">
    <property type="term" value="P:5-phosphoribose 1-diphosphate biosynthetic process"/>
    <property type="evidence" value="ECO:0007669"/>
    <property type="project" value="UniProtKB-UniPathway"/>
</dbReference>
<dbReference type="GO" id="GO:0043094">
    <property type="term" value="P:metabolic compound salvage"/>
    <property type="evidence" value="ECO:0007669"/>
    <property type="project" value="InterPro"/>
</dbReference>
<dbReference type="GO" id="GO:0009117">
    <property type="term" value="P:nucleotide metabolic process"/>
    <property type="evidence" value="ECO:0007669"/>
    <property type="project" value="InterPro"/>
</dbReference>
<dbReference type="CDD" id="cd16009">
    <property type="entry name" value="PPM"/>
    <property type="match status" value="1"/>
</dbReference>
<dbReference type="FunFam" id="3.30.70.1250:FF:000001">
    <property type="entry name" value="Phosphopentomutase"/>
    <property type="match status" value="1"/>
</dbReference>
<dbReference type="Gene3D" id="3.40.720.10">
    <property type="entry name" value="Alkaline Phosphatase, subunit A"/>
    <property type="match status" value="1"/>
</dbReference>
<dbReference type="Gene3D" id="3.30.70.1250">
    <property type="entry name" value="Phosphopentomutase"/>
    <property type="match status" value="1"/>
</dbReference>
<dbReference type="HAMAP" id="MF_00740">
    <property type="entry name" value="Phosphopentomut"/>
    <property type="match status" value="1"/>
</dbReference>
<dbReference type="InterPro" id="IPR017850">
    <property type="entry name" value="Alkaline_phosphatase_core_sf"/>
</dbReference>
<dbReference type="InterPro" id="IPR010045">
    <property type="entry name" value="DeoB"/>
</dbReference>
<dbReference type="InterPro" id="IPR006124">
    <property type="entry name" value="Metalloenzyme"/>
</dbReference>
<dbReference type="InterPro" id="IPR024052">
    <property type="entry name" value="Phosphopentomutase_DeoB_cap_sf"/>
</dbReference>
<dbReference type="NCBIfam" id="TIGR01696">
    <property type="entry name" value="deoB"/>
    <property type="match status" value="1"/>
</dbReference>
<dbReference type="NCBIfam" id="NF003766">
    <property type="entry name" value="PRK05362.1"/>
    <property type="match status" value="1"/>
</dbReference>
<dbReference type="PANTHER" id="PTHR21110">
    <property type="entry name" value="PHOSPHOPENTOMUTASE"/>
    <property type="match status" value="1"/>
</dbReference>
<dbReference type="PANTHER" id="PTHR21110:SF0">
    <property type="entry name" value="PHOSPHOPENTOMUTASE"/>
    <property type="match status" value="1"/>
</dbReference>
<dbReference type="Pfam" id="PF01676">
    <property type="entry name" value="Metalloenzyme"/>
    <property type="match status" value="1"/>
</dbReference>
<dbReference type="PIRSF" id="PIRSF001491">
    <property type="entry name" value="Ppentomutase"/>
    <property type="match status" value="1"/>
</dbReference>
<dbReference type="SUPFAM" id="SSF53649">
    <property type="entry name" value="Alkaline phosphatase-like"/>
    <property type="match status" value="1"/>
</dbReference>
<dbReference type="SUPFAM" id="SSF143856">
    <property type="entry name" value="DeoB insert domain-like"/>
    <property type="match status" value="1"/>
</dbReference>
<proteinExistence type="inferred from homology"/>
<sequence>MSKYKRIFTIVIDSLGIGAMNDSEKYGDVNVDTLGHIAESVDTFNIPNLQKMGIANLHPIKHVAPVENPIGYQAKMAEASVGKDTMTGHWEMMGLHITKPFKTFTDTGFPQELLDELTARTGHKIVGNKSASGTEILDELGEHQIATGDMIVYTSADSVLQICGQEETFGLEELYRCCEIARELTLKDEWKVGRIIARPYLGTKKGEFKRTSNRHDYALKPYGRTVLNELKDNNFDVISVGKIKDIFDGEGITEGNKSKSSVHGMEQTLEIMDRDFTGFCFVNLVDFDALWGHRRNPQGYAEELEKFDVNLGKVLEKLHEDDLLIITADHGNDPTYTGTDHTREYVPFLAYSPSMKGHGQLETPKTFATIGATIADNFGLKMPEGTIGESVLNKLV</sequence>
<gene>
    <name evidence="1" type="primary">deoB</name>
    <name type="ordered locus">CPF_0376</name>
</gene>
<keyword id="KW-0963">Cytoplasm</keyword>
<keyword id="KW-0413">Isomerase</keyword>
<keyword id="KW-0464">Manganese</keyword>
<keyword id="KW-0479">Metal-binding</keyword>
<feature type="chain" id="PRO_0000258279" description="Phosphopentomutase">
    <location>
        <begin position="1"/>
        <end position="396"/>
    </location>
</feature>
<feature type="binding site" evidence="1">
    <location>
        <position position="13"/>
    </location>
    <ligand>
        <name>Mn(2+)</name>
        <dbReference type="ChEBI" id="CHEBI:29035"/>
        <label>1</label>
    </ligand>
</feature>
<feature type="binding site" evidence="1">
    <location>
        <position position="288"/>
    </location>
    <ligand>
        <name>Mn(2+)</name>
        <dbReference type="ChEBI" id="CHEBI:29035"/>
        <label>2</label>
    </ligand>
</feature>
<feature type="binding site" evidence="1">
    <location>
        <position position="293"/>
    </location>
    <ligand>
        <name>Mn(2+)</name>
        <dbReference type="ChEBI" id="CHEBI:29035"/>
        <label>2</label>
    </ligand>
</feature>
<feature type="binding site" evidence="1">
    <location>
        <position position="329"/>
    </location>
    <ligand>
        <name>Mn(2+)</name>
        <dbReference type="ChEBI" id="CHEBI:29035"/>
        <label>1</label>
    </ligand>
</feature>
<feature type="binding site" evidence="1">
    <location>
        <position position="330"/>
    </location>
    <ligand>
        <name>Mn(2+)</name>
        <dbReference type="ChEBI" id="CHEBI:29035"/>
        <label>1</label>
    </ligand>
</feature>
<feature type="binding site" evidence="1">
    <location>
        <position position="341"/>
    </location>
    <ligand>
        <name>Mn(2+)</name>
        <dbReference type="ChEBI" id="CHEBI:29035"/>
        <label>2</label>
    </ligand>
</feature>
<name>DEOB_CLOP1</name>
<evidence type="ECO:0000255" key="1">
    <source>
        <dbReference type="HAMAP-Rule" id="MF_00740"/>
    </source>
</evidence>
<comment type="function">
    <text evidence="1">Isomerase that catalyzes the conversion of deoxy-ribose 1-phosphate (dRib-1-P) and ribose 1-phosphate (Rib-1-P) to deoxy-ribose 5-phosphate (dRib-5-P) and ribose 5-phosphate (Rib-5-P), respectively.</text>
</comment>
<comment type="catalytic activity">
    <reaction evidence="1">
        <text>2-deoxy-alpha-D-ribose 1-phosphate = 2-deoxy-D-ribose 5-phosphate</text>
        <dbReference type="Rhea" id="RHEA:27658"/>
        <dbReference type="ChEBI" id="CHEBI:57259"/>
        <dbReference type="ChEBI" id="CHEBI:62877"/>
        <dbReference type="EC" id="5.4.2.7"/>
    </reaction>
</comment>
<comment type="catalytic activity">
    <reaction evidence="1">
        <text>alpha-D-ribose 1-phosphate = D-ribose 5-phosphate</text>
        <dbReference type="Rhea" id="RHEA:18793"/>
        <dbReference type="ChEBI" id="CHEBI:57720"/>
        <dbReference type="ChEBI" id="CHEBI:78346"/>
        <dbReference type="EC" id="5.4.2.7"/>
    </reaction>
</comment>
<comment type="cofactor">
    <cofactor evidence="1">
        <name>Mn(2+)</name>
        <dbReference type="ChEBI" id="CHEBI:29035"/>
    </cofactor>
    <text evidence="1">Binds 2 manganese ions.</text>
</comment>
<comment type="pathway">
    <text evidence="1">Carbohydrate degradation; 2-deoxy-D-ribose 1-phosphate degradation; D-glyceraldehyde 3-phosphate and acetaldehyde from 2-deoxy-alpha-D-ribose 1-phosphate: step 1/2.</text>
</comment>
<comment type="subcellular location">
    <subcellularLocation>
        <location evidence="1">Cytoplasm</location>
    </subcellularLocation>
</comment>
<comment type="similarity">
    <text evidence="1">Belongs to the phosphopentomutase family.</text>
</comment>